<comment type="subcellular location">
    <subcellularLocation>
        <location>Secreted</location>
    </subcellularLocation>
</comment>
<comment type="tissue specificity">
    <text>Expressed by the skin dorsal glands.</text>
</comment>
<comment type="mass spectrometry" mass="1426.0" method="FAB" evidence="1"/>
<name>UPE51_UPEIN</name>
<accession>P82036</accession>
<organism>
    <name type="scientific">Uperoleia inundata</name>
    <name type="common">Floodplain toadlet</name>
    <dbReference type="NCBI Taxonomy" id="104953"/>
    <lineage>
        <taxon>Eukaryota</taxon>
        <taxon>Metazoa</taxon>
        <taxon>Chordata</taxon>
        <taxon>Craniata</taxon>
        <taxon>Vertebrata</taxon>
        <taxon>Euteleostomi</taxon>
        <taxon>Amphibia</taxon>
        <taxon>Batrachia</taxon>
        <taxon>Anura</taxon>
        <taxon>Neobatrachia</taxon>
        <taxon>Myobatrachoidea</taxon>
        <taxon>Myobatrachidae</taxon>
        <taxon>Myobatrachinae</taxon>
        <taxon>Uperoleia</taxon>
    </lineage>
</organism>
<sequence length="13" mass="1457">FQFVNPSDIVFGS</sequence>
<proteinExistence type="evidence at protein level"/>
<feature type="peptide" id="PRO_0000043862" description="Uperin-5.1">
    <location>
        <begin position="1"/>
        <end position="13"/>
    </location>
</feature>
<protein>
    <recommendedName>
        <fullName>Uperin-5.1</fullName>
    </recommendedName>
</protein>
<keyword id="KW-0878">Amphibian defense peptide</keyword>
<keyword id="KW-0903">Direct protein sequencing</keyword>
<keyword id="KW-0964">Secreted</keyword>
<reference key="1">
    <citation type="journal article" date="1996" name="Aust. J. Chem.">
        <title>Novel uperin peptides from the dorsal glands of the australian floodplain toadlet Uperoleia inundata.</title>
        <authorList>
            <person name="Bradford A.M."/>
            <person name="Raftery M.J."/>
            <person name="Bowie J.H."/>
            <person name="Tyler M.J."/>
            <person name="Wallace J.C."/>
            <person name="Adams G.W."/>
            <person name="Severini C."/>
        </authorList>
    </citation>
    <scope>PROTEIN SEQUENCE</scope>
    <scope>MASS SPECTROMETRY</scope>
    <source>
        <tissue>Skin secretion</tissue>
    </source>
</reference>
<dbReference type="GO" id="GO:0005576">
    <property type="term" value="C:extracellular region"/>
    <property type="evidence" value="ECO:0007669"/>
    <property type="project" value="UniProtKB-SubCell"/>
</dbReference>
<dbReference type="GO" id="GO:0006952">
    <property type="term" value="P:defense response"/>
    <property type="evidence" value="ECO:0007669"/>
    <property type="project" value="UniProtKB-KW"/>
</dbReference>
<evidence type="ECO:0000269" key="1">
    <source ref="1"/>
</evidence>